<evidence type="ECO:0000255" key="1">
    <source>
        <dbReference type="HAMAP-Rule" id="MF_01396"/>
    </source>
</evidence>
<organism>
    <name type="scientific">Escherichia coli O81 (strain ED1a)</name>
    <dbReference type="NCBI Taxonomy" id="585397"/>
    <lineage>
        <taxon>Bacteria</taxon>
        <taxon>Pseudomonadati</taxon>
        <taxon>Pseudomonadota</taxon>
        <taxon>Gammaproteobacteria</taxon>
        <taxon>Enterobacterales</taxon>
        <taxon>Enterobacteriaceae</taxon>
        <taxon>Escherichia</taxon>
    </lineage>
</organism>
<reference key="1">
    <citation type="journal article" date="2009" name="PLoS Genet.">
        <title>Organised genome dynamics in the Escherichia coli species results in highly diverse adaptive paths.</title>
        <authorList>
            <person name="Touchon M."/>
            <person name="Hoede C."/>
            <person name="Tenaillon O."/>
            <person name="Barbe V."/>
            <person name="Baeriswyl S."/>
            <person name="Bidet P."/>
            <person name="Bingen E."/>
            <person name="Bonacorsi S."/>
            <person name="Bouchier C."/>
            <person name="Bouvet O."/>
            <person name="Calteau A."/>
            <person name="Chiapello H."/>
            <person name="Clermont O."/>
            <person name="Cruveiller S."/>
            <person name="Danchin A."/>
            <person name="Diard M."/>
            <person name="Dossat C."/>
            <person name="Karoui M.E."/>
            <person name="Frapy E."/>
            <person name="Garry L."/>
            <person name="Ghigo J.M."/>
            <person name="Gilles A.M."/>
            <person name="Johnson J."/>
            <person name="Le Bouguenec C."/>
            <person name="Lescat M."/>
            <person name="Mangenot S."/>
            <person name="Martinez-Jehanne V."/>
            <person name="Matic I."/>
            <person name="Nassif X."/>
            <person name="Oztas S."/>
            <person name="Petit M.A."/>
            <person name="Pichon C."/>
            <person name="Rouy Z."/>
            <person name="Ruf C.S."/>
            <person name="Schneider D."/>
            <person name="Tourret J."/>
            <person name="Vacherie B."/>
            <person name="Vallenet D."/>
            <person name="Medigue C."/>
            <person name="Rocha E.P.C."/>
            <person name="Denamur E."/>
        </authorList>
    </citation>
    <scope>NUCLEOTIDE SEQUENCE [LARGE SCALE GENOMIC DNA]</scope>
    <source>
        <strain>ED1a</strain>
    </source>
</reference>
<proteinExistence type="inferred from homology"/>
<keyword id="KW-0066">ATP synthesis</keyword>
<keyword id="KW-0997">Cell inner membrane</keyword>
<keyword id="KW-1003">Cell membrane</keyword>
<keyword id="KW-0138">CF(0)</keyword>
<keyword id="KW-0375">Hydrogen ion transport</keyword>
<keyword id="KW-0406">Ion transport</keyword>
<keyword id="KW-0446">Lipid-binding</keyword>
<keyword id="KW-0472">Membrane</keyword>
<keyword id="KW-0812">Transmembrane</keyword>
<keyword id="KW-1133">Transmembrane helix</keyword>
<keyword id="KW-0813">Transport</keyword>
<dbReference type="EMBL" id="CU928162">
    <property type="protein sequence ID" value="CAR10547.2"/>
    <property type="molecule type" value="Genomic_DNA"/>
</dbReference>
<dbReference type="RefSeq" id="WP_000429386.1">
    <property type="nucleotide sequence ID" value="NC_011745.1"/>
</dbReference>
<dbReference type="SMR" id="B7N2H6"/>
<dbReference type="GeneID" id="98390858"/>
<dbReference type="KEGG" id="ecq:ECED1_4427"/>
<dbReference type="HOGENOM" id="CLU_148047_1_0_6"/>
<dbReference type="Proteomes" id="UP000000748">
    <property type="component" value="Chromosome"/>
</dbReference>
<dbReference type="GO" id="GO:0005886">
    <property type="term" value="C:plasma membrane"/>
    <property type="evidence" value="ECO:0007669"/>
    <property type="project" value="UniProtKB-SubCell"/>
</dbReference>
<dbReference type="GO" id="GO:0045259">
    <property type="term" value="C:proton-transporting ATP synthase complex"/>
    <property type="evidence" value="ECO:0007669"/>
    <property type="project" value="UniProtKB-KW"/>
</dbReference>
<dbReference type="GO" id="GO:0033177">
    <property type="term" value="C:proton-transporting two-sector ATPase complex, proton-transporting domain"/>
    <property type="evidence" value="ECO:0007669"/>
    <property type="project" value="InterPro"/>
</dbReference>
<dbReference type="GO" id="GO:0008289">
    <property type="term" value="F:lipid binding"/>
    <property type="evidence" value="ECO:0007669"/>
    <property type="project" value="UniProtKB-KW"/>
</dbReference>
<dbReference type="GO" id="GO:0046933">
    <property type="term" value="F:proton-transporting ATP synthase activity, rotational mechanism"/>
    <property type="evidence" value="ECO:0007669"/>
    <property type="project" value="UniProtKB-UniRule"/>
</dbReference>
<dbReference type="CDD" id="cd18185">
    <property type="entry name" value="ATP-synt_Fo_c_ATPE"/>
    <property type="match status" value="1"/>
</dbReference>
<dbReference type="FunFam" id="1.20.20.10:FF:000002">
    <property type="entry name" value="ATP synthase subunit c"/>
    <property type="match status" value="1"/>
</dbReference>
<dbReference type="Gene3D" id="1.20.20.10">
    <property type="entry name" value="F1F0 ATP synthase subunit C"/>
    <property type="match status" value="1"/>
</dbReference>
<dbReference type="HAMAP" id="MF_01396">
    <property type="entry name" value="ATP_synth_c_bact"/>
    <property type="match status" value="1"/>
</dbReference>
<dbReference type="InterPro" id="IPR005953">
    <property type="entry name" value="ATP_synth_csu_bac/chlpt"/>
</dbReference>
<dbReference type="InterPro" id="IPR000454">
    <property type="entry name" value="ATP_synth_F0_csu"/>
</dbReference>
<dbReference type="InterPro" id="IPR020537">
    <property type="entry name" value="ATP_synth_F0_csu_DDCD_BS"/>
</dbReference>
<dbReference type="InterPro" id="IPR038662">
    <property type="entry name" value="ATP_synth_F0_csu_sf"/>
</dbReference>
<dbReference type="InterPro" id="IPR002379">
    <property type="entry name" value="ATPase_proteolipid_c-like_dom"/>
</dbReference>
<dbReference type="InterPro" id="IPR035921">
    <property type="entry name" value="F/V-ATP_Csub_sf"/>
</dbReference>
<dbReference type="NCBIfam" id="TIGR01260">
    <property type="entry name" value="ATP_synt_c"/>
    <property type="match status" value="1"/>
</dbReference>
<dbReference type="NCBIfam" id="NF005363">
    <property type="entry name" value="PRK06876.1"/>
    <property type="match status" value="1"/>
</dbReference>
<dbReference type="Pfam" id="PF00137">
    <property type="entry name" value="ATP-synt_C"/>
    <property type="match status" value="1"/>
</dbReference>
<dbReference type="PRINTS" id="PR00124">
    <property type="entry name" value="ATPASEC"/>
</dbReference>
<dbReference type="SUPFAM" id="SSF81333">
    <property type="entry name" value="F1F0 ATP synthase subunit C"/>
    <property type="match status" value="1"/>
</dbReference>
<dbReference type="PROSITE" id="PS00605">
    <property type="entry name" value="ATPASE_C"/>
    <property type="match status" value="1"/>
</dbReference>
<comment type="function">
    <text evidence="1">F(1)F(0) ATP synthase produces ATP from ADP in the presence of a proton or sodium gradient. F-type ATPases consist of two structural domains, F(1) containing the extramembraneous catalytic core and F(0) containing the membrane proton channel, linked together by a central stalk and a peripheral stalk. During catalysis, ATP synthesis in the catalytic domain of F(1) is coupled via a rotary mechanism of the central stalk subunits to proton translocation.</text>
</comment>
<comment type="function">
    <text evidence="1">Key component of the F(0) channel; it plays a direct role in translocation across the membrane. A homomeric c-ring of between 10-14 subunits forms the central stalk rotor element with the F(1) delta and epsilon subunits.</text>
</comment>
<comment type="subunit">
    <text evidence="1">F-type ATPases have 2 components, F(1) - the catalytic core - and F(0) - the membrane proton channel. F(1) has five subunits: alpha(3), beta(3), gamma(1), delta(1), epsilon(1). F(0) has three main subunits: a(1), b(2) and c(10-14). The alpha and beta chains form an alternating ring which encloses part of the gamma chain. F(1) is attached to F(0) by a central stalk formed by the gamma and epsilon chains, while a peripheral stalk is formed by the delta and b chains.</text>
</comment>
<comment type="subcellular location">
    <subcellularLocation>
        <location evidence="1">Cell inner membrane</location>
        <topology evidence="1">Multi-pass membrane protein</topology>
    </subcellularLocation>
</comment>
<comment type="similarity">
    <text evidence="1">Belongs to the ATPase C chain family.</text>
</comment>
<name>ATPL_ECO81</name>
<gene>
    <name evidence="1" type="primary">atpE</name>
    <name type="ordered locus">ECED1_4427</name>
</gene>
<sequence length="79" mass="8256">MENLNMDLLYMAAAVMMGLAAIGAAIGIGILGGKFLEGAARQPDLIPLLRTQFFIVMGLVDAIPMIAVGLGLYVMFAVA</sequence>
<feature type="chain" id="PRO_1000184366" description="ATP synthase subunit c">
    <location>
        <begin position="1"/>
        <end position="79"/>
    </location>
</feature>
<feature type="transmembrane region" description="Helical" evidence="1">
    <location>
        <begin position="11"/>
        <end position="31"/>
    </location>
</feature>
<feature type="transmembrane region" description="Helical" evidence="1">
    <location>
        <begin position="53"/>
        <end position="73"/>
    </location>
</feature>
<feature type="site" description="Reversibly protonated during proton transport" evidence="1">
    <location>
        <position position="61"/>
    </location>
</feature>
<protein>
    <recommendedName>
        <fullName evidence="1">ATP synthase subunit c</fullName>
    </recommendedName>
    <alternativeName>
        <fullName evidence="1">ATP synthase F(0) sector subunit c</fullName>
    </alternativeName>
    <alternativeName>
        <fullName evidence="1">F-type ATPase subunit c</fullName>
        <shortName evidence="1">F-ATPase subunit c</shortName>
    </alternativeName>
    <alternativeName>
        <fullName evidence="1">Lipid-binding protein</fullName>
    </alternativeName>
</protein>
<accession>B7N2H6</accession>